<organism>
    <name type="scientific">Bacillus subtilis (strain 168)</name>
    <dbReference type="NCBI Taxonomy" id="224308"/>
    <lineage>
        <taxon>Bacteria</taxon>
        <taxon>Bacillati</taxon>
        <taxon>Bacillota</taxon>
        <taxon>Bacilli</taxon>
        <taxon>Bacillales</taxon>
        <taxon>Bacillaceae</taxon>
        <taxon>Bacillus</taxon>
    </lineage>
</organism>
<evidence type="ECO:0000255" key="1">
    <source>
        <dbReference type="PROSITE-ProRule" id="PRU00303"/>
    </source>
</evidence>
<evidence type="ECO:0000269" key="2">
    <source>
    </source>
</evidence>
<evidence type="ECO:0007829" key="3">
    <source>
        <dbReference type="PDB" id="4R4G"/>
    </source>
</evidence>
<name>YCDA_BACSU</name>
<sequence length="354" mass="39180">MFQKKTYAVFLILLLMMFTAACSGSKTSAEKKESETEKSSDIAQVKIKDVSYTLPSKYDKSTSDDQLVLKVNVAVKNTGKDPLNVDSMDFTLYQGDTKMSDTDPEDYSEKLQGSTINADKSVEGNLFFVVDKGKQYELNYTPESYGDKKPKSVTFKIDGKDKKILATADKLQDSAKALSAYVDVLLFGKDNADFEKITGANKNEIVNDFNESAKDGYLSASGLSSTYADSKALDNIVNGIKEGLSKNSSIQAKTTSISKDEAIVEATVKPVDASSLSDRIEDKVKDYYSKNSSASYEEAVKYALQVYPEEFKKLGPASSEKTVEVKMKKNDIDQWQLDMDDYRAAELVEAFIKE</sequence>
<dbReference type="EMBL" id="AB000617">
    <property type="protein sequence ID" value="BAA22239.1"/>
    <property type="molecule type" value="Genomic_DNA"/>
</dbReference>
<dbReference type="EMBL" id="AL009126">
    <property type="protein sequence ID" value="CAB12072.1"/>
    <property type="molecule type" value="Genomic_DNA"/>
</dbReference>
<dbReference type="PIR" id="C69755">
    <property type="entry name" value="C69755"/>
</dbReference>
<dbReference type="RefSeq" id="NP_388160.1">
    <property type="nucleotide sequence ID" value="NC_000964.3"/>
</dbReference>
<dbReference type="RefSeq" id="WP_003234750.1">
    <property type="nucleotide sequence ID" value="NZ_OZ025638.1"/>
</dbReference>
<dbReference type="PDB" id="4R4G">
    <property type="method" value="X-ray"/>
    <property type="resolution" value="2.62 A"/>
    <property type="chains" value="A=30-354"/>
</dbReference>
<dbReference type="PDBsum" id="4R4G"/>
<dbReference type="SMR" id="O34538"/>
<dbReference type="FunCoup" id="O34538">
    <property type="interactions" value="7"/>
</dbReference>
<dbReference type="STRING" id="224308.BSU02780"/>
<dbReference type="PaxDb" id="224308-BSU02780"/>
<dbReference type="EnsemblBacteria" id="CAB12072">
    <property type="protein sequence ID" value="CAB12072"/>
    <property type="gene ID" value="BSU_02780"/>
</dbReference>
<dbReference type="GeneID" id="938380"/>
<dbReference type="KEGG" id="bsu:BSU02780"/>
<dbReference type="PATRIC" id="fig|224308.179.peg.288"/>
<dbReference type="eggNOG" id="ENOG5032ESZ">
    <property type="taxonomic scope" value="Bacteria"/>
</dbReference>
<dbReference type="InParanoid" id="O34538"/>
<dbReference type="OrthoDB" id="2156807at2"/>
<dbReference type="BioCyc" id="BSUB:BSU02780-MONOMER"/>
<dbReference type="EvolutionaryTrace" id="O34538"/>
<dbReference type="Proteomes" id="UP000001570">
    <property type="component" value="Chromosome"/>
</dbReference>
<dbReference type="GO" id="GO:0045121">
    <property type="term" value="C:membrane raft"/>
    <property type="evidence" value="ECO:0007669"/>
    <property type="project" value="UniProtKB-SubCell"/>
</dbReference>
<dbReference type="GO" id="GO:0005886">
    <property type="term" value="C:plasma membrane"/>
    <property type="evidence" value="ECO:0007669"/>
    <property type="project" value="UniProtKB-SubCell"/>
</dbReference>
<dbReference type="Gene3D" id="2.60.40.1240">
    <property type="match status" value="1"/>
</dbReference>
<dbReference type="InterPro" id="IPR029051">
    <property type="entry name" value="DUF4352"/>
</dbReference>
<dbReference type="InterPro" id="IPR031343">
    <property type="entry name" value="DUF5105"/>
</dbReference>
<dbReference type="InterPro" id="IPR029050">
    <property type="entry name" value="Immunoprotect_excell_Ig-like"/>
</dbReference>
<dbReference type="Pfam" id="PF11611">
    <property type="entry name" value="DUF4352"/>
    <property type="match status" value="1"/>
</dbReference>
<dbReference type="Pfam" id="PF17118">
    <property type="entry name" value="DUF5105"/>
    <property type="match status" value="1"/>
</dbReference>
<dbReference type="PROSITE" id="PS51257">
    <property type="entry name" value="PROKAR_LIPOPROTEIN"/>
    <property type="match status" value="1"/>
</dbReference>
<comment type="subcellular location">
    <subcellularLocation>
        <location evidence="1 2">Cell membrane</location>
        <topology evidence="1">Lipid-anchor</topology>
    </subcellularLocation>
    <subcellularLocation>
        <location evidence="2">Membrane raft</location>
    </subcellularLocation>
    <text evidence="2">Present in detergent-resistant membrane (DRM) fractions that may be equivalent to eukaryotic membrane rafts; these rafts include proteins involved in signaling, molecule trafficking and protein secretion.</text>
</comment>
<gene>
    <name type="primary">ycdA</name>
    <name type="ordered locus">BSU02780</name>
</gene>
<keyword id="KW-0002">3D-structure</keyword>
<keyword id="KW-1003">Cell membrane</keyword>
<keyword id="KW-0449">Lipoprotein</keyword>
<keyword id="KW-0472">Membrane</keyword>
<keyword id="KW-0564">Palmitate</keyword>
<keyword id="KW-1185">Reference proteome</keyword>
<keyword id="KW-0732">Signal</keyword>
<proteinExistence type="evidence at protein level"/>
<reference key="1">
    <citation type="journal article" date="1997" name="Microbiology">
        <title>A 32 kb nucleotide sequence from the region of the lincomycin-resistance gene (22 degrees-25 degrees) of the Bacillus subtilis chromosome and identification of the site of the lin-2 mutation.</title>
        <authorList>
            <person name="Kumano M."/>
            <person name="Tamakoshi A."/>
            <person name="Yamane K."/>
        </authorList>
    </citation>
    <scope>NUCLEOTIDE SEQUENCE [GENOMIC DNA]</scope>
    <source>
        <strain>168</strain>
    </source>
</reference>
<reference key="2">
    <citation type="journal article" date="1997" name="Nature">
        <title>The complete genome sequence of the Gram-positive bacterium Bacillus subtilis.</title>
        <authorList>
            <person name="Kunst F."/>
            <person name="Ogasawara N."/>
            <person name="Moszer I."/>
            <person name="Albertini A.M."/>
            <person name="Alloni G."/>
            <person name="Azevedo V."/>
            <person name="Bertero M.G."/>
            <person name="Bessieres P."/>
            <person name="Bolotin A."/>
            <person name="Borchert S."/>
            <person name="Borriss R."/>
            <person name="Boursier L."/>
            <person name="Brans A."/>
            <person name="Braun M."/>
            <person name="Brignell S.C."/>
            <person name="Bron S."/>
            <person name="Brouillet S."/>
            <person name="Bruschi C.V."/>
            <person name="Caldwell B."/>
            <person name="Capuano V."/>
            <person name="Carter N.M."/>
            <person name="Choi S.-K."/>
            <person name="Codani J.-J."/>
            <person name="Connerton I.F."/>
            <person name="Cummings N.J."/>
            <person name="Daniel R.A."/>
            <person name="Denizot F."/>
            <person name="Devine K.M."/>
            <person name="Duesterhoeft A."/>
            <person name="Ehrlich S.D."/>
            <person name="Emmerson P.T."/>
            <person name="Entian K.-D."/>
            <person name="Errington J."/>
            <person name="Fabret C."/>
            <person name="Ferrari E."/>
            <person name="Foulger D."/>
            <person name="Fritz C."/>
            <person name="Fujita M."/>
            <person name="Fujita Y."/>
            <person name="Fuma S."/>
            <person name="Galizzi A."/>
            <person name="Galleron N."/>
            <person name="Ghim S.-Y."/>
            <person name="Glaser P."/>
            <person name="Goffeau A."/>
            <person name="Golightly E.J."/>
            <person name="Grandi G."/>
            <person name="Guiseppi G."/>
            <person name="Guy B.J."/>
            <person name="Haga K."/>
            <person name="Haiech J."/>
            <person name="Harwood C.R."/>
            <person name="Henaut A."/>
            <person name="Hilbert H."/>
            <person name="Holsappel S."/>
            <person name="Hosono S."/>
            <person name="Hullo M.-F."/>
            <person name="Itaya M."/>
            <person name="Jones L.-M."/>
            <person name="Joris B."/>
            <person name="Karamata D."/>
            <person name="Kasahara Y."/>
            <person name="Klaerr-Blanchard M."/>
            <person name="Klein C."/>
            <person name="Kobayashi Y."/>
            <person name="Koetter P."/>
            <person name="Koningstein G."/>
            <person name="Krogh S."/>
            <person name="Kumano M."/>
            <person name="Kurita K."/>
            <person name="Lapidus A."/>
            <person name="Lardinois S."/>
            <person name="Lauber J."/>
            <person name="Lazarevic V."/>
            <person name="Lee S.-M."/>
            <person name="Levine A."/>
            <person name="Liu H."/>
            <person name="Masuda S."/>
            <person name="Mauel C."/>
            <person name="Medigue C."/>
            <person name="Medina N."/>
            <person name="Mellado R.P."/>
            <person name="Mizuno M."/>
            <person name="Moestl D."/>
            <person name="Nakai S."/>
            <person name="Noback M."/>
            <person name="Noone D."/>
            <person name="O'Reilly M."/>
            <person name="Ogawa K."/>
            <person name="Ogiwara A."/>
            <person name="Oudega B."/>
            <person name="Park S.-H."/>
            <person name="Parro V."/>
            <person name="Pohl T.M."/>
            <person name="Portetelle D."/>
            <person name="Porwollik S."/>
            <person name="Prescott A.M."/>
            <person name="Presecan E."/>
            <person name="Pujic P."/>
            <person name="Purnelle B."/>
            <person name="Rapoport G."/>
            <person name="Rey M."/>
            <person name="Reynolds S."/>
            <person name="Rieger M."/>
            <person name="Rivolta C."/>
            <person name="Rocha E."/>
            <person name="Roche B."/>
            <person name="Rose M."/>
            <person name="Sadaie Y."/>
            <person name="Sato T."/>
            <person name="Scanlan E."/>
            <person name="Schleich S."/>
            <person name="Schroeter R."/>
            <person name="Scoffone F."/>
            <person name="Sekiguchi J."/>
            <person name="Sekowska A."/>
            <person name="Seror S.J."/>
            <person name="Serror P."/>
            <person name="Shin B.-S."/>
            <person name="Soldo B."/>
            <person name="Sorokin A."/>
            <person name="Tacconi E."/>
            <person name="Takagi T."/>
            <person name="Takahashi H."/>
            <person name="Takemaru K."/>
            <person name="Takeuchi M."/>
            <person name="Tamakoshi A."/>
            <person name="Tanaka T."/>
            <person name="Terpstra P."/>
            <person name="Tognoni A."/>
            <person name="Tosato V."/>
            <person name="Uchiyama S."/>
            <person name="Vandenbol M."/>
            <person name="Vannier F."/>
            <person name="Vassarotti A."/>
            <person name="Viari A."/>
            <person name="Wambutt R."/>
            <person name="Wedler E."/>
            <person name="Wedler H."/>
            <person name="Weitzenegger T."/>
            <person name="Winters P."/>
            <person name="Wipat A."/>
            <person name="Yamamoto H."/>
            <person name="Yamane K."/>
            <person name="Yasumoto K."/>
            <person name="Yata K."/>
            <person name="Yoshida K."/>
            <person name="Yoshikawa H.-F."/>
            <person name="Zumstein E."/>
            <person name="Yoshikawa H."/>
            <person name="Danchin A."/>
        </authorList>
    </citation>
    <scope>NUCLEOTIDE SEQUENCE [LARGE SCALE GENOMIC DNA]</scope>
    <source>
        <strain>168</strain>
    </source>
</reference>
<reference key="3">
    <citation type="journal article" date="2012" name="Mol. Microbiol.">
        <title>The biofilm formation defect of a Bacillus subtilis flotillin-defective mutant involves the protease FtsH.</title>
        <authorList>
            <person name="Yepes A."/>
            <person name="Schneider J."/>
            <person name="Mielich B."/>
            <person name="Koch G."/>
            <person name="Garcia-Betancur J.C."/>
            <person name="Ramamurthi K.S."/>
            <person name="Vlamakis H."/>
            <person name="Lopez D."/>
        </authorList>
    </citation>
    <scope>IDENTIFICATION BY MASS SPECTROMETRY</scope>
    <scope>SUBCELLULAR LOCATION</scope>
    <source>
        <strain>168 / Marburg / ATCC 6051 / DSM 10 / JCM 1465 / NBRC 13719 / NCIMB 3610 / NRRL NRS-744 / VKM B-501</strain>
    </source>
</reference>
<protein>
    <recommendedName>
        <fullName>Uncharacterized lipoprotein YcdA</fullName>
    </recommendedName>
</protein>
<accession>O34538</accession>
<feature type="signal peptide" evidence="1">
    <location>
        <begin position="1"/>
        <end position="21"/>
    </location>
</feature>
<feature type="chain" id="PRO_0000013691" description="Uncharacterized lipoprotein YcdA">
    <location>
        <begin position="22"/>
        <end position="354"/>
    </location>
</feature>
<feature type="lipid moiety-binding region" description="N-palmitoyl cysteine" evidence="1">
    <location>
        <position position="22"/>
    </location>
</feature>
<feature type="lipid moiety-binding region" description="S-diacylglycerol cysteine" evidence="1">
    <location>
        <position position="22"/>
    </location>
</feature>
<feature type="strand" evidence="3">
    <location>
        <begin position="35"/>
        <end position="39"/>
    </location>
</feature>
<feature type="strand" evidence="3">
    <location>
        <begin position="44"/>
        <end position="53"/>
    </location>
</feature>
<feature type="strand" evidence="3">
    <location>
        <begin position="67"/>
        <end position="76"/>
    </location>
</feature>
<feature type="strand" evidence="3">
    <location>
        <begin position="79"/>
        <end position="81"/>
    </location>
</feature>
<feature type="strand" evidence="3">
    <location>
        <begin position="83"/>
        <end position="85"/>
    </location>
</feature>
<feature type="helix" evidence="3">
    <location>
        <begin position="87"/>
        <end position="89"/>
    </location>
</feature>
<feature type="strand" evidence="3">
    <location>
        <begin position="90"/>
        <end position="94"/>
    </location>
</feature>
<feature type="strand" evidence="3">
    <location>
        <begin position="97"/>
        <end position="99"/>
    </location>
</feature>
<feature type="helix" evidence="3">
    <location>
        <begin position="107"/>
        <end position="109"/>
    </location>
</feature>
<feature type="strand" evidence="3">
    <location>
        <begin position="114"/>
        <end position="116"/>
    </location>
</feature>
<feature type="strand" evidence="3">
    <location>
        <begin position="121"/>
        <end position="130"/>
    </location>
</feature>
<feature type="strand" evidence="3">
    <location>
        <begin position="135"/>
        <end position="140"/>
    </location>
</feature>
<feature type="helix" evidence="3">
    <location>
        <begin position="148"/>
        <end position="151"/>
    </location>
</feature>
<feature type="strand" evidence="3">
    <location>
        <begin position="153"/>
        <end position="158"/>
    </location>
</feature>
<feature type="helix" evidence="3">
    <location>
        <begin position="162"/>
        <end position="169"/>
    </location>
</feature>
<feature type="helix" evidence="3">
    <location>
        <begin position="170"/>
        <end position="172"/>
    </location>
</feature>
<feature type="helix" evidence="3">
    <location>
        <begin position="173"/>
        <end position="185"/>
    </location>
</feature>
<feature type="helix" evidence="3">
    <location>
        <begin position="193"/>
        <end position="198"/>
    </location>
</feature>
<feature type="helix" evidence="3">
    <location>
        <begin position="202"/>
        <end position="220"/>
    </location>
</feature>
<feature type="helix" evidence="3">
    <location>
        <begin position="225"/>
        <end position="229"/>
    </location>
</feature>
<feature type="helix" evidence="3">
    <location>
        <begin position="231"/>
        <end position="247"/>
    </location>
</feature>
<feature type="strand" evidence="3">
    <location>
        <begin position="249"/>
        <end position="258"/>
    </location>
</feature>
<feature type="strand" evidence="3">
    <location>
        <begin position="261"/>
        <end position="269"/>
    </location>
</feature>
<feature type="helix" evidence="3">
    <location>
        <begin position="276"/>
        <end position="288"/>
    </location>
</feature>
<feature type="helix" evidence="3">
    <location>
        <begin position="296"/>
        <end position="311"/>
    </location>
</feature>
<feature type="strand" evidence="3">
    <location>
        <begin position="321"/>
        <end position="329"/>
    </location>
</feature>
<feature type="helix" evidence="3">
    <location>
        <begin position="342"/>
        <end position="349"/>
    </location>
</feature>